<reference key="1">
    <citation type="journal article" date="2004" name="J. Bacteriol.">
        <title>Comparative genomics of two Leptospira interrogans serovars reveals novel insights into physiology and pathogenesis.</title>
        <authorList>
            <person name="Nascimento A.L.T.O."/>
            <person name="Ko A.I."/>
            <person name="Martins E.A.L."/>
            <person name="Monteiro-Vitorello C.B."/>
            <person name="Ho P.L."/>
            <person name="Haake D.A."/>
            <person name="Verjovski-Almeida S."/>
            <person name="Hartskeerl R.A."/>
            <person name="Marques M.V."/>
            <person name="Oliveira M.C."/>
            <person name="Menck C.F.M."/>
            <person name="Leite L.C.C."/>
            <person name="Carrer H."/>
            <person name="Coutinho L.L."/>
            <person name="Degrave W.M."/>
            <person name="Dellagostin O.A."/>
            <person name="El-Dorry H."/>
            <person name="Ferro E.S."/>
            <person name="Ferro M.I.T."/>
            <person name="Furlan L.R."/>
            <person name="Gamberini M."/>
            <person name="Giglioti E.A."/>
            <person name="Goes-Neto A."/>
            <person name="Goldman G.H."/>
            <person name="Goldman M.H.S."/>
            <person name="Harakava R."/>
            <person name="Jeronimo S.M.B."/>
            <person name="Junqueira-de-Azevedo I.L.M."/>
            <person name="Kimura E.T."/>
            <person name="Kuramae E.E."/>
            <person name="Lemos E.G.M."/>
            <person name="Lemos M.V.F."/>
            <person name="Marino C.L."/>
            <person name="Nunes L.R."/>
            <person name="de Oliveira R.C."/>
            <person name="Pereira G.G."/>
            <person name="Reis M.S."/>
            <person name="Schriefer A."/>
            <person name="Siqueira W.J."/>
            <person name="Sommer P."/>
            <person name="Tsai S.M."/>
            <person name="Simpson A.J.G."/>
            <person name="Ferro J.A."/>
            <person name="Camargo L.E.A."/>
            <person name="Kitajima J.P."/>
            <person name="Setubal J.C."/>
            <person name="Van Sluys M.A."/>
        </authorList>
    </citation>
    <scope>NUCLEOTIDE SEQUENCE [LARGE SCALE GENOMIC DNA]</scope>
    <source>
        <strain>Fiocruz L1-130</strain>
    </source>
</reference>
<organism>
    <name type="scientific">Leptospira interrogans serogroup Icterohaemorrhagiae serovar copenhageni (strain Fiocruz L1-130)</name>
    <dbReference type="NCBI Taxonomy" id="267671"/>
    <lineage>
        <taxon>Bacteria</taxon>
        <taxon>Pseudomonadati</taxon>
        <taxon>Spirochaetota</taxon>
        <taxon>Spirochaetia</taxon>
        <taxon>Leptospirales</taxon>
        <taxon>Leptospiraceae</taxon>
        <taxon>Leptospira</taxon>
    </lineage>
</organism>
<comment type="function">
    <text evidence="1">Catalyzes the reduction of ribonucleotides to deoxyribonucleotides. May function to provide a pool of deoxyribonucleotide precursors for DNA repair during oxygen limitation and/or for immediate growth after restoration of oxygen (By similarity).</text>
</comment>
<comment type="catalytic activity">
    <reaction>
        <text>a 2'-deoxyribonucleoside 5'-diphosphate + [thioredoxin]-disulfide + H2O = a ribonucleoside 5'-diphosphate + [thioredoxin]-dithiol</text>
        <dbReference type="Rhea" id="RHEA:23252"/>
        <dbReference type="Rhea" id="RHEA-COMP:10698"/>
        <dbReference type="Rhea" id="RHEA-COMP:10700"/>
        <dbReference type="ChEBI" id="CHEBI:15377"/>
        <dbReference type="ChEBI" id="CHEBI:29950"/>
        <dbReference type="ChEBI" id="CHEBI:50058"/>
        <dbReference type="ChEBI" id="CHEBI:57930"/>
        <dbReference type="ChEBI" id="CHEBI:73316"/>
        <dbReference type="EC" id="1.17.4.1"/>
    </reaction>
</comment>
<comment type="cofactor">
    <cofactor evidence="1">
        <name>adenosylcob(III)alamin</name>
        <dbReference type="ChEBI" id="CHEBI:18408"/>
    </cofactor>
    <text evidence="1">5'-deoxyadenosylcobalamine (coenzyme B12).</text>
</comment>
<comment type="similarity">
    <text evidence="3">Belongs to the ribonucleoside diphosphate reductase class-2 family.</text>
</comment>
<comment type="sequence caution" evidence="3">
    <conflict type="erroneous initiation">
        <sequence resource="EMBL-CDS" id="AAS70183"/>
    </conflict>
    <text>Extended N-terminus.</text>
</comment>
<name>NRDJ_LEPIC</name>
<evidence type="ECO:0000250" key="1"/>
<evidence type="ECO:0000256" key="2">
    <source>
        <dbReference type="SAM" id="MobiDB-lite"/>
    </source>
</evidence>
<evidence type="ECO:0000305" key="3"/>
<gene>
    <name type="primary">nrdJ</name>
    <name type="ordered locus">LIC_11587</name>
</gene>
<keyword id="KW-0846">Cobalamin</keyword>
<keyword id="KW-0170">Cobalt</keyword>
<keyword id="KW-1015">Disulfide bond</keyword>
<keyword id="KW-0237">DNA synthesis</keyword>
<keyword id="KW-0547">Nucleotide-binding</keyword>
<keyword id="KW-0560">Oxidoreductase</keyword>
<accession>Q72S00</accession>
<protein>
    <recommendedName>
        <fullName>Vitamin B12-dependent ribonucleotide reductase</fullName>
        <ecNumber>1.17.4.1</ecNumber>
    </recommendedName>
    <alternativeName>
        <fullName>Ribonucleoside-diphosphate reductase NrdJ</fullName>
    </alternativeName>
</protein>
<feature type="chain" id="PRO_0000231659" description="Vitamin B12-dependent ribonucleotide reductase">
    <location>
        <begin position="1"/>
        <end position="1201"/>
    </location>
</feature>
<feature type="region of interest" description="Disordered" evidence="2">
    <location>
        <begin position="1100"/>
        <end position="1120"/>
    </location>
</feature>
<feature type="compositionally biased region" description="Basic and acidic residues" evidence="2">
    <location>
        <begin position="1100"/>
        <end position="1118"/>
    </location>
</feature>
<feature type="active site" description="Proton acceptor" evidence="1">
    <location>
        <position position="482"/>
    </location>
</feature>
<feature type="active site" description="Cysteine radical intermediate" evidence="1">
    <location>
        <position position="484"/>
    </location>
</feature>
<feature type="active site" description="Proton acceptor" evidence="1">
    <location>
        <position position="486"/>
    </location>
</feature>
<feature type="binding site" evidence="1">
    <location>
        <position position="153"/>
    </location>
    <ligand>
        <name>substrate</name>
    </ligand>
</feature>
<feature type="binding site" evidence="1">
    <location>
        <begin position="198"/>
        <end position="199"/>
    </location>
    <ligand>
        <name>substrate</name>
    </ligand>
</feature>
<feature type="binding site" evidence="1">
    <location>
        <position position="230"/>
    </location>
    <ligand>
        <name>substrate</name>
    </ligand>
</feature>
<feature type="binding site" evidence="1">
    <location>
        <begin position="482"/>
        <end position="486"/>
    </location>
    <ligand>
        <name>substrate</name>
    </ligand>
</feature>
<feature type="binding site" evidence="1">
    <location>
        <begin position="683"/>
        <end position="687"/>
    </location>
    <ligand>
        <name>substrate</name>
    </ligand>
</feature>
<feature type="disulfide bond" description="Redox-active" evidence="1">
    <location>
        <begin position="199"/>
        <end position="495"/>
    </location>
</feature>
<dbReference type="EC" id="1.17.4.1"/>
<dbReference type="EMBL" id="AE016823">
    <property type="protein sequence ID" value="AAS70183.1"/>
    <property type="status" value="ALT_INIT"/>
    <property type="molecule type" value="Genomic_DNA"/>
</dbReference>
<dbReference type="RefSeq" id="WP_000783496.1">
    <property type="nucleotide sequence ID" value="NC_005823.1"/>
</dbReference>
<dbReference type="SMR" id="Q72S00"/>
<dbReference type="KEGG" id="lic:LIC_11587"/>
<dbReference type="HOGENOM" id="CLU_000404_0_1_12"/>
<dbReference type="Proteomes" id="UP000007037">
    <property type="component" value="Chromosome I"/>
</dbReference>
<dbReference type="GO" id="GO:0031419">
    <property type="term" value="F:cobalamin binding"/>
    <property type="evidence" value="ECO:0007669"/>
    <property type="project" value="UniProtKB-KW"/>
</dbReference>
<dbReference type="GO" id="GO:0050897">
    <property type="term" value="F:cobalt ion binding"/>
    <property type="evidence" value="ECO:0007669"/>
    <property type="project" value="InterPro"/>
</dbReference>
<dbReference type="GO" id="GO:0000166">
    <property type="term" value="F:nucleotide binding"/>
    <property type="evidence" value="ECO:0007669"/>
    <property type="project" value="UniProtKB-KW"/>
</dbReference>
<dbReference type="GO" id="GO:0004748">
    <property type="term" value="F:ribonucleoside-diphosphate reductase activity, thioredoxin disulfide as acceptor"/>
    <property type="evidence" value="ECO:0007669"/>
    <property type="project" value="UniProtKB-EC"/>
</dbReference>
<dbReference type="GO" id="GO:0071897">
    <property type="term" value="P:DNA biosynthetic process"/>
    <property type="evidence" value="ECO:0007669"/>
    <property type="project" value="UniProtKB-KW"/>
</dbReference>
<dbReference type="CDD" id="cd02888">
    <property type="entry name" value="RNR_II_dimer"/>
    <property type="match status" value="1"/>
</dbReference>
<dbReference type="FunFam" id="3.20.70.20:FF:000015">
    <property type="entry name" value="Vitamin B12-dependent ribonucleotide reductase"/>
    <property type="match status" value="1"/>
</dbReference>
<dbReference type="FunFam" id="3.20.70.20:FF:000016">
    <property type="entry name" value="Vitamin B12-dependent ribonucleotide reductase"/>
    <property type="match status" value="1"/>
</dbReference>
<dbReference type="FunFam" id="3.20.70.20:FF:000017">
    <property type="entry name" value="Vitamin B12-dependent ribonucleotide reductase"/>
    <property type="match status" value="1"/>
</dbReference>
<dbReference type="Gene3D" id="3.20.70.20">
    <property type="match status" value="3"/>
</dbReference>
<dbReference type="InterPro" id="IPR050862">
    <property type="entry name" value="RdRp_reductase_class-2"/>
</dbReference>
<dbReference type="InterPro" id="IPR013678">
    <property type="entry name" value="RNR_2_N"/>
</dbReference>
<dbReference type="InterPro" id="IPR000788">
    <property type="entry name" value="RNR_lg_C"/>
</dbReference>
<dbReference type="InterPro" id="IPR013344">
    <property type="entry name" value="RNR_NrdJ/NrdZ"/>
</dbReference>
<dbReference type="InterPro" id="IPR024434">
    <property type="entry name" value="TSCPD_dom"/>
</dbReference>
<dbReference type="InterPro" id="IPR029072">
    <property type="entry name" value="YebC-like"/>
</dbReference>
<dbReference type="NCBIfam" id="TIGR02504">
    <property type="entry name" value="NrdJ_Z"/>
    <property type="match status" value="1"/>
</dbReference>
<dbReference type="NCBIfam" id="NF005736">
    <property type="entry name" value="PRK07562.1"/>
    <property type="match status" value="1"/>
</dbReference>
<dbReference type="PANTHER" id="PTHR43371:SF1">
    <property type="entry name" value="RIBONUCLEOSIDE-DIPHOSPHATE REDUCTASE"/>
    <property type="match status" value="1"/>
</dbReference>
<dbReference type="PANTHER" id="PTHR43371">
    <property type="entry name" value="VITAMIN B12-DEPENDENT RIBONUCLEOTIDE REDUCTASE"/>
    <property type="match status" value="1"/>
</dbReference>
<dbReference type="Pfam" id="PF08471">
    <property type="entry name" value="Ribonuc_red_2_N"/>
    <property type="match status" value="1"/>
</dbReference>
<dbReference type="Pfam" id="PF02867">
    <property type="entry name" value="Ribonuc_red_lgC"/>
    <property type="match status" value="2"/>
</dbReference>
<dbReference type="Pfam" id="PF12637">
    <property type="entry name" value="TSCPD"/>
    <property type="match status" value="1"/>
</dbReference>
<dbReference type="PRINTS" id="PR01183">
    <property type="entry name" value="RIBORDTASEM1"/>
</dbReference>
<dbReference type="SUPFAM" id="SSF51998">
    <property type="entry name" value="PFL-like glycyl radical enzymes"/>
    <property type="match status" value="1"/>
</dbReference>
<dbReference type="SUPFAM" id="SSF75625">
    <property type="entry name" value="YebC-like"/>
    <property type="match status" value="1"/>
</dbReference>
<proteinExistence type="inferred from homology"/>
<sequence length="1201" mass="133918">MKMNRHFTVPQNGESSTIQWTKRNSKITNPDGSKVFEANDILVPEDWSQVAVDILAQKYFRRKGVPKYLKKVQEDGIPEWLQKSIPDTEKLESLKPEDRFGGETSALEVFHRLAGCWTYWGYKYKYFSDEESAKIFYDEIVYMLATQMAAPNSPQWFNTGLNWAYGIDGKSQGHYYVDPSTGKLVKSTSAYEHPQPHACFIQSVDDDLVNEGGIMDLWVREARLFKYGSGTGTNFSNLRGENEPLSGGGKSSGLMSFLKIGDRAAGAIKSGGTTRRAAKMVCLDVDHPDIENFIDWKVTEEKKVASLVTGSMLNNRHLNAIMSACYEMEGEDRFNPKKNSSLKKTIQDAKKVLIPDNYIKRVIDLARQGYKEILFEELTTDWQSDAYNTVSGQNSNNSIRLTNEFMAAVEQDQPWNLYFRTEKEKAKVEGRKAKPSQTLRARELWEKISYAAWASADPGTQYHTTINEWHTCPEDGPINASNPCSEYMFLDNTACNLASANLQKFVNLETLNFDVEGFRYLCKLWTIILEISVTMAQFPSKEIAELSYKFRTLGLGYANLGSVLMVLGIPYDSQQAMAITGAISSIMHMTAYATSAEMAKEQGPFVGYAKNQKHMLRVIRNHRRAAYNAPSGDYEGLTITPIGINPAFCPSYMLKAAQEDADLALSLGEKYGFRNAQVTVIAPTGTIGLVMDCDTTGIEPDFALVKFKKLAGGGYFKIINQSVPYGLKKLGYSPSEIEAIVNYCKGHATLNGAPVINTQALKEKGFTNEILEKVEASLPLAFDINFAFNKFNLGENFLTKNLGISKEIFDSPGFSLLEHLGFTKEDINKANDYVCGTMTIENAPFLKEKDYPVFDCANKCGKYGKRFLSYESHIRIMAAAQPFISGAISKTINLPEEAVIEDIKNAYFLSWKMMIKANALYRDGSKLSQPLNSVLELLNGIEIDDQEEIREATISKDPVQIAEKIVTKYISHRRKLPSRRAGYTQKAIVGGHKVYLRTGEYEDGQIGEIFIDMHKEGAAFRSLMNAFAISVSLGLQHGVPLEEYVDAFTFFKFEPNGIVSGNKHIKMSTSVIDYIFRELAITYLGRYDLGQVAPEDLRGDEIGSKRATAESNGQEKETLSSMTAVIEPTPKKEVETISYSQMISKEKPSSSPSGISLLEEVKLAKIKGYTGDSCSECGSFEMVRNGSCLKCMSCGSTTGCS</sequence>